<name>QAY_NEUCR</name>
<organism>
    <name type="scientific">Neurospora crassa (strain ATCC 24698 / 74-OR23-1A / CBS 708.71 / DSM 1257 / FGSC 987)</name>
    <dbReference type="NCBI Taxonomy" id="367110"/>
    <lineage>
        <taxon>Eukaryota</taxon>
        <taxon>Fungi</taxon>
        <taxon>Dikarya</taxon>
        <taxon>Ascomycota</taxon>
        <taxon>Pezizomycotina</taxon>
        <taxon>Sordariomycetes</taxon>
        <taxon>Sordariomycetidae</taxon>
        <taxon>Sordariales</taxon>
        <taxon>Sordariaceae</taxon>
        <taxon>Neurospora</taxon>
    </lineage>
</organism>
<evidence type="ECO:0000255" key="1"/>
<evidence type="ECO:0000256" key="2">
    <source>
        <dbReference type="SAM" id="MobiDB-lite"/>
    </source>
</evidence>
<evidence type="ECO:0000269" key="3">
    <source>
    </source>
</evidence>
<evidence type="ECO:0000269" key="4">
    <source>
    </source>
</evidence>
<evidence type="ECO:0000269" key="5">
    <source>
    </source>
</evidence>
<evidence type="ECO:0000269" key="6">
    <source>
    </source>
</evidence>
<evidence type="ECO:0000269" key="7">
    <source>
    </source>
</evidence>
<evidence type="ECO:0000269" key="8">
    <source>
    </source>
</evidence>
<evidence type="ECO:0000303" key="9">
    <source>
    </source>
</evidence>
<evidence type="ECO:0000305" key="10"/>
<evidence type="ECO:0000305" key="11">
    <source>
    </source>
</evidence>
<reference key="1">
    <citation type="journal article" date="1989" name="J. Mol. Biol.">
        <title>DNA sequence, organization and regulation of the qa gene cluster of Neurospora crassa.</title>
        <authorList>
            <person name="Geever R.F."/>
            <person name="Huiet L."/>
            <person name="Baum J.A."/>
            <person name="Tyler B.M."/>
            <person name="Patel V.B."/>
            <person name="Rutledge B.J."/>
            <person name="Case M.E."/>
            <person name="Giles N.H."/>
        </authorList>
    </citation>
    <scope>NUCLEOTIDE SEQUENCE [GENOMIC DNA]</scope>
    <source>
        <strain>ATCC 24698 / 74-OR23-1A / CBS 708.71 / DSM 1257 / FGSC 987</strain>
    </source>
</reference>
<reference key="2">
    <citation type="journal article" date="2003" name="Nature">
        <title>The genome sequence of the filamentous fungus Neurospora crassa.</title>
        <authorList>
            <person name="Galagan J.E."/>
            <person name="Calvo S.E."/>
            <person name="Borkovich K.A."/>
            <person name="Selker E.U."/>
            <person name="Read N.D."/>
            <person name="Jaffe D.B."/>
            <person name="FitzHugh W."/>
            <person name="Ma L.-J."/>
            <person name="Smirnov S."/>
            <person name="Purcell S."/>
            <person name="Rehman B."/>
            <person name="Elkins T."/>
            <person name="Engels R."/>
            <person name="Wang S."/>
            <person name="Nielsen C.B."/>
            <person name="Butler J."/>
            <person name="Endrizzi M."/>
            <person name="Qui D."/>
            <person name="Ianakiev P."/>
            <person name="Bell-Pedersen D."/>
            <person name="Nelson M.A."/>
            <person name="Werner-Washburne M."/>
            <person name="Selitrennikoff C.P."/>
            <person name="Kinsey J.A."/>
            <person name="Braun E.L."/>
            <person name="Zelter A."/>
            <person name="Schulte U."/>
            <person name="Kothe G.O."/>
            <person name="Jedd G."/>
            <person name="Mewes H.-W."/>
            <person name="Staben C."/>
            <person name="Marcotte E."/>
            <person name="Greenberg D."/>
            <person name="Roy A."/>
            <person name="Foley K."/>
            <person name="Naylor J."/>
            <person name="Stange-Thomann N."/>
            <person name="Barrett R."/>
            <person name="Gnerre S."/>
            <person name="Kamal M."/>
            <person name="Kamvysselis M."/>
            <person name="Mauceli E.W."/>
            <person name="Bielke C."/>
            <person name="Rudd S."/>
            <person name="Frishman D."/>
            <person name="Krystofova S."/>
            <person name="Rasmussen C."/>
            <person name="Metzenberg R.L."/>
            <person name="Perkins D.D."/>
            <person name="Kroken S."/>
            <person name="Cogoni C."/>
            <person name="Macino G."/>
            <person name="Catcheside D.E.A."/>
            <person name="Li W."/>
            <person name="Pratt R.J."/>
            <person name="Osmani S.A."/>
            <person name="DeSouza C.P.C."/>
            <person name="Glass N.L."/>
            <person name="Orbach M.J."/>
            <person name="Berglund J.A."/>
            <person name="Voelker R."/>
            <person name="Yarden O."/>
            <person name="Plamann M."/>
            <person name="Seiler S."/>
            <person name="Dunlap J.C."/>
            <person name="Radford A."/>
            <person name="Aramayo R."/>
            <person name="Natvig D.O."/>
            <person name="Alex L.A."/>
            <person name="Mannhaupt G."/>
            <person name="Ebbole D.J."/>
            <person name="Freitag M."/>
            <person name="Paulsen I."/>
            <person name="Sachs M.S."/>
            <person name="Lander E.S."/>
            <person name="Nusbaum C."/>
            <person name="Birren B.W."/>
        </authorList>
    </citation>
    <scope>NUCLEOTIDE SEQUENCE [LARGE SCALE GENOMIC DNA]</scope>
    <source>
        <strain>ATCC 24698 / 74-OR23-1A / CBS 708.71 / DSM 1257 / FGSC 987</strain>
    </source>
</reference>
<reference key="3">
    <citation type="journal article" date="1981" name="Proc. Natl. Acad. Sci. U.S.A.">
        <title>Genetic organization and transcriptional regulation in the qa gene cluster of Neurospora crassa.</title>
        <authorList>
            <person name="Patel V.B."/>
            <person name="Schweizer M."/>
            <person name="Dykstra C.C."/>
            <person name="Kushner S.R."/>
            <person name="Giles N.H."/>
        </authorList>
    </citation>
    <scope>FUNCTION</scope>
    <scope>INDUCTION</scope>
</reference>
<reference key="4">
    <citation type="journal article" date="1992" name="Genetics">
        <title>Use of gene replacement transformation to elucidate gene function in the qa gene cluster of Neurospora crassa.</title>
        <authorList>
            <person name="Case M.E."/>
            <person name="Geever R.F."/>
            <person name="Asch D.K."/>
        </authorList>
    </citation>
    <scope>FUNCTION</scope>
    <scope>DISRUPTION PHENOTYPE</scope>
</reference>
<reference key="5">
    <citation type="journal article" date="2002" name="Proc. Natl. Acad. Sci. U.S.A.">
        <title>An ensemble method for identifying regulatory circuits with special reference to the qa gene cluster of Neurospora crassa.</title>
        <authorList>
            <person name="Battogtokh D."/>
            <person name="Asch D.K."/>
            <person name="Case M.E."/>
            <person name="Arnold J."/>
            <person name="Schuttler H.B."/>
        </authorList>
    </citation>
    <scope>INDUCTION</scope>
</reference>
<reference key="6">
    <citation type="journal article" date="2007" name="Bioinformation">
        <title>Genome-wide expression analysis of genetic networks in Neurospora crassa.</title>
        <authorList>
            <person name="Logan D.A."/>
            <person name="Koch A.L."/>
            <person name="Dong W."/>
            <person name="Griffith J."/>
            <person name="Nilsen R."/>
            <person name="Case M.E."/>
            <person name="Schuettler H.B."/>
            <person name="Arnold J."/>
        </authorList>
    </citation>
    <scope>INDUCTION</scope>
</reference>
<reference key="7">
    <citation type="journal article" date="2009" name="Fungal Genet. Biol.">
        <title>Catabolite repression directly affects transcription of the qa-y gene of Neurospora crassa.</title>
        <authorList>
            <person name="Arnett D.R."/>
            <person name="Lorimer H.E."/>
            <person name="Asch D.K."/>
        </authorList>
    </citation>
    <scope>INDUCTION</scope>
</reference>
<feature type="chain" id="PRO_0000050449" description="MFS-type transporter qa-x">
    <location>
        <begin position="1"/>
        <end position="537"/>
    </location>
</feature>
<feature type="topological domain" description="Cytoplasmic" evidence="1">
    <location>
        <begin position="1"/>
        <end position="26"/>
    </location>
</feature>
<feature type="transmembrane region" description="Helical; Name=1" evidence="1">
    <location>
        <begin position="27"/>
        <end position="47"/>
    </location>
</feature>
<feature type="topological domain" description="Extracellular" evidence="1">
    <location>
        <begin position="48"/>
        <end position="74"/>
    </location>
</feature>
<feature type="transmembrane region" description="Helical; Name=2" evidence="1">
    <location>
        <begin position="75"/>
        <end position="95"/>
    </location>
</feature>
<feature type="topological domain" description="Cytoplasmic" evidence="1">
    <location>
        <begin position="96"/>
        <end position="98"/>
    </location>
</feature>
<feature type="transmembrane region" description="Helical; Name=3" evidence="1">
    <location>
        <begin position="99"/>
        <end position="119"/>
    </location>
</feature>
<feature type="topological domain" description="Extracellular" evidence="1">
    <location>
        <begin position="120"/>
        <end position="131"/>
    </location>
</feature>
<feature type="transmembrane region" description="Helical; Name=4" evidence="1">
    <location>
        <begin position="132"/>
        <end position="152"/>
    </location>
</feature>
<feature type="topological domain" description="Cytoplasmic" evidence="1">
    <location>
        <begin position="153"/>
        <end position="160"/>
    </location>
</feature>
<feature type="transmembrane region" description="Helical; Name=5" evidence="1">
    <location>
        <begin position="161"/>
        <end position="181"/>
    </location>
</feature>
<feature type="topological domain" description="Extracellular" evidence="1">
    <location>
        <begin position="182"/>
        <end position="195"/>
    </location>
</feature>
<feature type="transmembrane region" description="Helical; Name=6" evidence="1">
    <location>
        <begin position="196"/>
        <end position="216"/>
    </location>
</feature>
<feature type="topological domain" description="Cytoplasmic" evidence="1">
    <location>
        <begin position="217"/>
        <end position="285"/>
    </location>
</feature>
<feature type="transmembrane region" description="Helical; Name=7" evidence="1">
    <location>
        <begin position="286"/>
        <end position="306"/>
    </location>
</feature>
<feature type="topological domain" description="Extracellular" evidence="1">
    <location>
        <begin position="307"/>
        <end position="327"/>
    </location>
</feature>
<feature type="transmembrane region" description="Helical; Name=8" evidence="1">
    <location>
        <begin position="328"/>
        <end position="349"/>
    </location>
</feature>
<feature type="topological domain" description="Cytoplasmic" evidence="1">
    <location>
        <begin position="350"/>
        <end position="352"/>
    </location>
</feature>
<feature type="transmembrane region" description="Helical; Name=9" evidence="1">
    <location>
        <begin position="353"/>
        <end position="373"/>
    </location>
</feature>
<feature type="topological domain" description="Extracellular" evidence="1">
    <location>
        <begin position="374"/>
        <end position="389"/>
    </location>
</feature>
<feature type="transmembrane region" description="Helical; Name=10" evidence="1">
    <location>
        <begin position="390"/>
        <end position="410"/>
    </location>
</feature>
<feature type="topological domain" description="Cytoplasmic" evidence="1">
    <location>
        <begin position="411"/>
        <end position="435"/>
    </location>
</feature>
<feature type="transmembrane region" description="Helical; Name=11" evidence="1">
    <location>
        <begin position="436"/>
        <end position="456"/>
    </location>
</feature>
<feature type="topological domain" description="Extracellular" evidence="1">
    <location>
        <begin position="457"/>
        <end position="458"/>
    </location>
</feature>
<feature type="transmembrane region" description="Helical; Name=12" evidence="1">
    <location>
        <begin position="459"/>
        <end position="479"/>
    </location>
</feature>
<feature type="topological domain" description="Cytoplasmic" evidence="1">
    <location>
        <begin position="480"/>
        <end position="537"/>
    </location>
</feature>
<feature type="region of interest" description="Disordered" evidence="2">
    <location>
        <begin position="514"/>
        <end position="537"/>
    </location>
</feature>
<feature type="compositionally biased region" description="Basic and acidic residues" evidence="2">
    <location>
        <begin position="514"/>
        <end position="531"/>
    </location>
</feature>
<feature type="glycosylation site" description="N-linked (GlcNAc...) asparagine" evidence="1">
    <location>
        <position position="184"/>
    </location>
</feature>
<feature type="sequence conflict" description="In Ref. 1; CAA32752." evidence="10" ref="1">
    <original>E</original>
    <variation>V</variation>
    <location>
        <position position="481"/>
    </location>
</feature>
<protein>
    <recommendedName>
        <fullName evidence="9">MFS-type transporter qa-x</fullName>
    </recommendedName>
    <alternativeName>
        <fullName evidence="9">Quinate permease</fullName>
    </alternativeName>
    <alternativeName>
        <fullName evidence="9">Quinate transporter</fullName>
    </alternativeName>
    <alternativeName>
        <fullName evidence="9">Quinic acid degradation cluster protein y</fullName>
    </alternativeName>
</protein>
<accession>P11636</accession>
<accession>Q7RVA0</accession>
<comment type="function">
    <text evidence="4 7 8 11">MFS-type transporter; part of the qa gene cluster that mediates the catabolism of quinic acid (QA) and as such, allows the use of QA as a sole carbon source (PubMed:2525625, PubMed:6458044). Involved in the upatke of QA (PubMed:1533844). The qa cluster encodes 3 inducible enymes (qa-2, qa-3 and qa-4) catalyzing the first three reactions in the catabolism of quinic acid to protocatechuic acid (also known as 3,4-Dihydroxybenzoic acid) (Probable).</text>
</comment>
<comment type="subcellular location">
    <subcellularLocation>
        <location evidence="1">Membrane</location>
        <topology evidence="1">Multi-pass membrane protein</topology>
    </subcellularLocation>
</comment>
<comment type="induction">
    <text evidence="3 5 6 8">Expression is induced in the presence of quinic acid (PubMed:6458044). The quinic acid (qa) gene cluster is subject to two levels of gene control: a primary system which responds to the presence of quinic acid via the qa-1S repressor protein that blocks the qa-1F activator, and a secondary system which represses transcription of qa genes in the presence of a preferred carbon source such as glucose (PubMed:12477937, PubMed:17597928, PubMed:19236936, PubMed:6458044).</text>
</comment>
<comment type="disruption phenotype">
    <text evidence="4">Impairs growth on quinic acid as a sole carbon source and leads to very low inducible levels of qa-2 and qa-3 enzyme activities.</text>
</comment>
<comment type="similarity">
    <text evidence="10">Belongs to the major facilitator superfamily. Sugar transporter (TC 2.A.1.1) family.</text>
</comment>
<proteinExistence type="evidence at transcript level"/>
<gene>
    <name evidence="9" type="primary">qa-y</name>
    <name type="ORF">NCU06026</name>
</gene>
<keyword id="KW-0325">Glycoprotein</keyword>
<keyword id="KW-0472">Membrane</keyword>
<keyword id="KW-0672">Quinate metabolism</keyword>
<keyword id="KW-1185">Reference proteome</keyword>
<keyword id="KW-0812">Transmembrane</keyword>
<keyword id="KW-1133">Transmembrane helix</keyword>
<keyword id="KW-0813">Transport</keyword>
<dbReference type="EMBL" id="X14603">
    <property type="protein sequence ID" value="CAA32752.1"/>
    <property type="molecule type" value="Genomic_DNA"/>
</dbReference>
<dbReference type="EMBL" id="CM002242">
    <property type="protein sequence ID" value="EAA30380.1"/>
    <property type="molecule type" value="Genomic_DNA"/>
</dbReference>
<dbReference type="PIR" id="S04254">
    <property type="entry name" value="G31277"/>
</dbReference>
<dbReference type="RefSeq" id="XP_959616.1">
    <property type="nucleotide sequence ID" value="XM_954523.2"/>
</dbReference>
<dbReference type="SMR" id="P11636"/>
<dbReference type="STRING" id="367110.P11636"/>
<dbReference type="TCDB" id="2.A.1.1.7">
    <property type="family name" value="the major facilitator superfamily (mfs)"/>
</dbReference>
<dbReference type="GlyCosmos" id="P11636">
    <property type="glycosylation" value="1 site, No reported glycans"/>
</dbReference>
<dbReference type="PaxDb" id="5141-EFNCRP00000005335"/>
<dbReference type="EnsemblFungi" id="EAA30380">
    <property type="protein sequence ID" value="EAA30380"/>
    <property type="gene ID" value="NCU06026"/>
</dbReference>
<dbReference type="GeneID" id="3875775"/>
<dbReference type="KEGG" id="ncr:NCU06026"/>
<dbReference type="VEuPathDB" id="FungiDB:NCU06026"/>
<dbReference type="HOGENOM" id="CLU_001265_30_12_1"/>
<dbReference type="InParanoid" id="P11636"/>
<dbReference type="OMA" id="PADHIYM"/>
<dbReference type="OrthoDB" id="508119at2759"/>
<dbReference type="Proteomes" id="UP000001805">
    <property type="component" value="Chromosome 7, Linkage Group VII"/>
</dbReference>
<dbReference type="GO" id="GO:0016020">
    <property type="term" value="C:membrane"/>
    <property type="evidence" value="ECO:0000318"/>
    <property type="project" value="GO_Central"/>
</dbReference>
<dbReference type="GO" id="GO:0005351">
    <property type="term" value="F:carbohydrate:proton symporter activity"/>
    <property type="evidence" value="ECO:0000318"/>
    <property type="project" value="GO_Central"/>
</dbReference>
<dbReference type="GO" id="GO:0008643">
    <property type="term" value="P:carbohydrate transport"/>
    <property type="evidence" value="ECO:0000318"/>
    <property type="project" value="GO_Central"/>
</dbReference>
<dbReference type="GO" id="GO:0019630">
    <property type="term" value="P:quinate metabolic process"/>
    <property type="evidence" value="ECO:0007669"/>
    <property type="project" value="UniProtKB-KW"/>
</dbReference>
<dbReference type="CDD" id="cd17356">
    <property type="entry name" value="MFS_HXT"/>
    <property type="match status" value="1"/>
</dbReference>
<dbReference type="FunFam" id="1.20.1250.20:FF:000026">
    <property type="entry name" value="MFS quinate transporter QutD"/>
    <property type="match status" value="1"/>
</dbReference>
<dbReference type="Gene3D" id="1.20.1250.20">
    <property type="entry name" value="MFS general substrate transporter like domains"/>
    <property type="match status" value="1"/>
</dbReference>
<dbReference type="InterPro" id="IPR020846">
    <property type="entry name" value="MFS_dom"/>
</dbReference>
<dbReference type="InterPro" id="IPR005828">
    <property type="entry name" value="MFS_sugar_transport-like"/>
</dbReference>
<dbReference type="InterPro" id="IPR050360">
    <property type="entry name" value="MFS_Sugar_Transporters"/>
</dbReference>
<dbReference type="InterPro" id="IPR036259">
    <property type="entry name" value="MFS_trans_sf"/>
</dbReference>
<dbReference type="InterPro" id="IPR003663">
    <property type="entry name" value="Sugar/inositol_transpt"/>
</dbReference>
<dbReference type="InterPro" id="IPR005829">
    <property type="entry name" value="Sugar_transporter_CS"/>
</dbReference>
<dbReference type="NCBIfam" id="TIGR00879">
    <property type="entry name" value="SP"/>
    <property type="match status" value="1"/>
</dbReference>
<dbReference type="PANTHER" id="PTHR48022:SF34">
    <property type="entry name" value="MAJOR FACILITATOR SUPERFAMILY (MFS) PROFILE DOMAIN-CONTAINING PROTEIN-RELATED"/>
    <property type="match status" value="1"/>
</dbReference>
<dbReference type="PANTHER" id="PTHR48022">
    <property type="entry name" value="PLASTIDIC GLUCOSE TRANSPORTER 4"/>
    <property type="match status" value="1"/>
</dbReference>
<dbReference type="Pfam" id="PF00083">
    <property type="entry name" value="Sugar_tr"/>
    <property type="match status" value="1"/>
</dbReference>
<dbReference type="PRINTS" id="PR00171">
    <property type="entry name" value="SUGRTRNSPORT"/>
</dbReference>
<dbReference type="SUPFAM" id="SSF103473">
    <property type="entry name" value="MFS general substrate transporter"/>
    <property type="match status" value="1"/>
</dbReference>
<dbReference type="PROSITE" id="PS50850">
    <property type="entry name" value="MFS"/>
    <property type="match status" value="1"/>
</dbReference>
<dbReference type="PROSITE" id="PS00216">
    <property type="entry name" value="SUGAR_TRANSPORT_1"/>
    <property type="match status" value="1"/>
</dbReference>
<dbReference type="PROSITE" id="PS00217">
    <property type="entry name" value="SUGAR_TRANSPORT_2"/>
    <property type="match status" value="1"/>
</dbReference>
<sequence>MTLLALKEDRPTPKAVYNWRVYTCAAIASFASCMIGYDSAFIGTTLALPSFTKEFDFASYTPGALALLQSNIVSVYQAGAFFGCLFAYATSYFLGRRKSLIAFSVVFIIGAAIMLAADGQGRGIDPIIAGRVLAGIGVGGASNMVPIYISELAPPAVRGRLVGIYELGWQIGGLVGFWINYGVNTTMAPTRSQWLIPFAVQLIPAGLLFLGSFWIPESPRWLYANGKREEAMKVLCWIRNLEPTDRYIVQEVSFIDADLERYTRQVGNGFWKPFLSLKQRKVQWRFFLGGMLFFWQNGSGINAINYYSPTVFRSIGITGTDTGFLTTGIFGVVKMVLTIIWLLWLVDLVGRRRILFIGAAGGSLCMWFIGAYIKIADPGSNKAEDAKLTSGGIAAIFFFYLWTAFYTPSWNGTPWVINSEMFDQNTRSLGQASAAANNWFWNFIISRFTPQMFIKMEYGVYFFFASLMLLSIVFIYFFLPETKSIPLEAMDRLFEIKPVQNANKNLMAELNFDRNPEREESSSLDDKDRVTQTENAV</sequence>